<comment type="function">
    <text>Component of the nopaline active transport system probably consisting of four subunits: Q, M, P and T. This system is also capable of transporting octopine provided that catabolic functions are induced with nopaline.</text>
</comment>
<comment type="subcellular location">
    <subcellularLocation>
        <location evidence="2">Cell inner membrane</location>
        <topology evidence="2">Peripheral membrane protein</topology>
    </subcellularLocation>
</comment>
<comment type="similarity">
    <text evidence="2">Belongs to the ABC transporter superfamily.</text>
</comment>
<organism>
    <name type="scientific">Agrobacterium fabrum (strain C58 / ATCC 33970)</name>
    <name type="common">Agrobacterium tumefaciens (strain C58)</name>
    <dbReference type="NCBI Taxonomy" id="176299"/>
    <lineage>
        <taxon>Bacteria</taxon>
        <taxon>Pseudomonadati</taxon>
        <taxon>Pseudomonadota</taxon>
        <taxon>Alphaproteobacteria</taxon>
        <taxon>Hyphomicrobiales</taxon>
        <taxon>Rhizobiaceae</taxon>
        <taxon>Rhizobium/Agrobacterium group</taxon>
        <taxon>Agrobacterium</taxon>
        <taxon>Agrobacterium tumefaciens complex</taxon>
    </lineage>
</organism>
<geneLocation type="plasmid">
    <name>pTiC58</name>
</geneLocation>
<sequence length="257" mass="28189">MDATQPTLVAEDVHKNFGTLEILKGISLTANKGDVVSIIGSSGSGKSTFLRCMNFLETPNKGRIAVGQEEVVVKTDAAGRLIGVDRKKIERMRMQLGMVFQSFNLWGHMTVLQNVMEGPLHVLKQPKGEVRDRAMDFLDKVGIANKHAAYPSQLSGGQQQRVSIARALAMQPSALLFDEPTSALDPELVGEVLKVIRKLAEEGRTMVVVTHEMGFARDVSSKVLFLEKGQIEEQGTPQEVFQNPTSPRCRAFLSSVL</sequence>
<evidence type="ECO:0000255" key="1">
    <source>
        <dbReference type="PROSITE-ProRule" id="PRU00434"/>
    </source>
</evidence>
<evidence type="ECO:0000305" key="2"/>
<dbReference type="EMBL" id="M77785">
    <property type="protein sequence ID" value="AAA50510.1"/>
    <property type="molecule type" value="Genomic_DNA"/>
</dbReference>
<dbReference type="EMBL" id="AE007871">
    <property type="protein sequence ID" value="AAK90986.2"/>
    <property type="molecule type" value="Genomic_DNA"/>
</dbReference>
<dbReference type="PIR" id="AB3231">
    <property type="entry name" value="AB3231"/>
</dbReference>
<dbReference type="PIR" id="G42600">
    <property type="entry name" value="G42600"/>
</dbReference>
<dbReference type="RefSeq" id="NP_396545.2">
    <property type="nucleotide sequence ID" value="NC_003065.3"/>
</dbReference>
<dbReference type="RefSeq" id="WP_010974830.1">
    <property type="nucleotide sequence ID" value="NC_003065.3"/>
</dbReference>
<dbReference type="SMR" id="P35116"/>
<dbReference type="TCDB" id="3.A.1.3.6">
    <property type="family name" value="the atp-binding cassette (abc) superfamily"/>
</dbReference>
<dbReference type="EnsemblBacteria" id="AAK90986">
    <property type="protein sequence ID" value="AAK90986"/>
    <property type="gene ID" value="Atu6028"/>
</dbReference>
<dbReference type="GeneID" id="1137351"/>
<dbReference type="KEGG" id="atu:Atu6028"/>
<dbReference type="PATRIC" id="fig|176299.10.peg.5235"/>
<dbReference type="HOGENOM" id="CLU_000604_1_22_5"/>
<dbReference type="OrthoDB" id="9802264at2"/>
<dbReference type="PhylomeDB" id="P35116"/>
<dbReference type="BioCyc" id="AGRO:ATU6028-MONOMER"/>
<dbReference type="Proteomes" id="UP000000813">
    <property type="component" value="Plasmid Ti"/>
</dbReference>
<dbReference type="GO" id="GO:0005886">
    <property type="term" value="C:plasma membrane"/>
    <property type="evidence" value="ECO:0007669"/>
    <property type="project" value="UniProtKB-SubCell"/>
</dbReference>
<dbReference type="GO" id="GO:0015424">
    <property type="term" value="F:ABC-type amino acid transporter activity"/>
    <property type="evidence" value="ECO:0007669"/>
    <property type="project" value="InterPro"/>
</dbReference>
<dbReference type="GO" id="GO:0005524">
    <property type="term" value="F:ATP binding"/>
    <property type="evidence" value="ECO:0007669"/>
    <property type="project" value="UniProtKB-KW"/>
</dbReference>
<dbReference type="GO" id="GO:0016887">
    <property type="term" value="F:ATP hydrolysis activity"/>
    <property type="evidence" value="ECO:0007669"/>
    <property type="project" value="InterPro"/>
</dbReference>
<dbReference type="CDD" id="cd03262">
    <property type="entry name" value="ABC_HisP_GlnQ"/>
    <property type="match status" value="1"/>
</dbReference>
<dbReference type="FunFam" id="3.40.50.300:FF:000020">
    <property type="entry name" value="Amino acid ABC transporter ATP-binding component"/>
    <property type="match status" value="1"/>
</dbReference>
<dbReference type="Gene3D" id="3.40.50.300">
    <property type="entry name" value="P-loop containing nucleotide triphosphate hydrolases"/>
    <property type="match status" value="1"/>
</dbReference>
<dbReference type="InterPro" id="IPR003593">
    <property type="entry name" value="AAA+_ATPase"/>
</dbReference>
<dbReference type="InterPro" id="IPR030679">
    <property type="entry name" value="ABC_ATPase_HisP-typ"/>
</dbReference>
<dbReference type="InterPro" id="IPR003439">
    <property type="entry name" value="ABC_transporter-like_ATP-bd"/>
</dbReference>
<dbReference type="InterPro" id="IPR017871">
    <property type="entry name" value="ABC_transporter-like_CS"/>
</dbReference>
<dbReference type="InterPro" id="IPR050086">
    <property type="entry name" value="MetN_ABC_transporter-like"/>
</dbReference>
<dbReference type="InterPro" id="IPR027417">
    <property type="entry name" value="P-loop_NTPase"/>
</dbReference>
<dbReference type="PANTHER" id="PTHR43166">
    <property type="entry name" value="AMINO ACID IMPORT ATP-BINDING PROTEIN"/>
    <property type="match status" value="1"/>
</dbReference>
<dbReference type="PANTHER" id="PTHR43166:SF35">
    <property type="entry name" value="L-CYSTINE IMPORT ATP-BINDING PROTEIN TCYN"/>
    <property type="match status" value="1"/>
</dbReference>
<dbReference type="Pfam" id="PF00005">
    <property type="entry name" value="ABC_tran"/>
    <property type="match status" value="1"/>
</dbReference>
<dbReference type="PIRSF" id="PIRSF039085">
    <property type="entry name" value="ABC_ATPase_HisP"/>
    <property type="match status" value="1"/>
</dbReference>
<dbReference type="SMART" id="SM00382">
    <property type="entry name" value="AAA"/>
    <property type="match status" value="1"/>
</dbReference>
<dbReference type="SUPFAM" id="SSF52540">
    <property type="entry name" value="P-loop containing nucleoside triphosphate hydrolases"/>
    <property type="match status" value="1"/>
</dbReference>
<dbReference type="PROSITE" id="PS00211">
    <property type="entry name" value="ABC_TRANSPORTER_1"/>
    <property type="match status" value="1"/>
</dbReference>
<dbReference type="PROSITE" id="PS50893">
    <property type="entry name" value="ABC_TRANSPORTER_2"/>
    <property type="match status" value="1"/>
</dbReference>
<proteinExistence type="inferred from homology"/>
<protein>
    <recommendedName>
        <fullName>Nopaline permease ATP-binding protein P</fullName>
    </recommendedName>
</protein>
<reference key="1">
    <citation type="journal article" date="1992" name="J. Bacteriol.">
        <title>Opine transport genes in the octopine (occ) and nopaline (noc) catabolic regions in Ti plasmids of Agrobacterium tumefaciens.</title>
        <authorList>
            <person name="Zanker H."/>
            <person name="von Lintig J."/>
            <person name="Schroeder J."/>
        </authorList>
    </citation>
    <scope>NUCLEOTIDE SEQUENCE [GENOMIC DNA]</scope>
</reference>
<reference key="2">
    <citation type="journal article" date="2001" name="Science">
        <title>The genome of the natural genetic engineer Agrobacterium tumefaciens C58.</title>
        <authorList>
            <person name="Wood D.W."/>
            <person name="Setubal J.C."/>
            <person name="Kaul R."/>
            <person name="Monks D.E."/>
            <person name="Kitajima J.P."/>
            <person name="Okura V.K."/>
            <person name="Zhou Y."/>
            <person name="Chen L."/>
            <person name="Wood G.E."/>
            <person name="Almeida N.F. Jr."/>
            <person name="Woo L."/>
            <person name="Chen Y."/>
            <person name="Paulsen I.T."/>
            <person name="Eisen J.A."/>
            <person name="Karp P.D."/>
            <person name="Bovee D. Sr."/>
            <person name="Chapman P."/>
            <person name="Clendenning J."/>
            <person name="Deatherage G."/>
            <person name="Gillet W."/>
            <person name="Grant C."/>
            <person name="Kutyavin T."/>
            <person name="Levy R."/>
            <person name="Li M.-J."/>
            <person name="McClelland E."/>
            <person name="Palmieri A."/>
            <person name="Raymond C."/>
            <person name="Rouse G."/>
            <person name="Saenphimmachak C."/>
            <person name="Wu Z."/>
            <person name="Romero P."/>
            <person name="Gordon D."/>
            <person name="Zhang S."/>
            <person name="Yoo H."/>
            <person name="Tao Y."/>
            <person name="Biddle P."/>
            <person name="Jung M."/>
            <person name="Krespan W."/>
            <person name="Perry M."/>
            <person name="Gordon-Kamm B."/>
            <person name="Liao L."/>
            <person name="Kim S."/>
            <person name="Hendrick C."/>
            <person name="Zhao Z.-Y."/>
            <person name="Dolan M."/>
            <person name="Chumley F."/>
            <person name="Tingey S.V."/>
            <person name="Tomb J.-F."/>
            <person name="Gordon M.P."/>
            <person name="Olson M.V."/>
            <person name="Nester E.W."/>
        </authorList>
    </citation>
    <scope>NUCLEOTIDE SEQUENCE [LARGE SCALE GENOMIC DNA]</scope>
</reference>
<reference key="3">
    <citation type="journal article" date="2001" name="Science">
        <title>Genome sequence of the plant pathogen and biotechnology agent Agrobacterium tumefaciens C58.</title>
        <authorList>
            <person name="Goodner B."/>
            <person name="Hinkle G."/>
            <person name="Gattung S."/>
            <person name="Miller N."/>
            <person name="Blanchard M."/>
            <person name="Qurollo B."/>
            <person name="Goldman B.S."/>
            <person name="Cao Y."/>
            <person name="Askenazi M."/>
            <person name="Halling C."/>
            <person name="Mullin L."/>
            <person name="Houmiel K."/>
            <person name="Gordon J."/>
            <person name="Vaudin M."/>
            <person name="Iartchouk O."/>
            <person name="Epp A."/>
            <person name="Liu F."/>
            <person name="Wollam C."/>
            <person name="Allinger M."/>
            <person name="Doughty D."/>
            <person name="Scott C."/>
            <person name="Lappas C."/>
            <person name="Markelz B."/>
            <person name="Flanagan C."/>
            <person name="Crowell C."/>
            <person name="Gurson J."/>
            <person name="Lomo C."/>
            <person name="Sear C."/>
            <person name="Strub G."/>
            <person name="Cielo C."/>
            <person name="Slater S."/>
        </authorList>
    </citation>
    <scope>NUCLEOTIDE SEQUENCE [LARGE SCALE GENOMIC DNA]</scope>
    <source>
        <strain>C58 / ATCC 33970</strain>
    </source>
</reference>
<gene>
    <name type="primary">nocP</name>
    <name type="ordered locus">Atu6028</name>
    <name type="ORF">AGR_pTi_69</name>
</gene>
<name>NOCP_AGRFC</name>
<accession>P35116</accession>
<feature type="chain" id="PRO_0000092633" description="Nopaline permease ATP-binding protein P">
    <location>
        <begin position="1"/>
        <end position="257"/>
    </location>
</feature>
<feature type="domain" description="ABC transporter" evidence="1">
    <location>
        <begin position="8"/>
        <end position="253"/>
    </location>
</feature>
<feature type="binding site" evidence="1">
    <location>
        <begin position="40"/>
        <end position="47"/>
    </location>
    <ligand>
        <name>ATP</name>
        <dbReference type="ChEBI" id="CHEBI:30616"/>
    </ligand>
</feature>
<keyword id="KW-0067">ATP-binding</keyword>
<keyword id="KW-0997">Cell inner membrane</keyword>
<keyword id="KW-1003">Cell membrane</keyword>
<keyword id="KW-0472">Membrane</keyword>
<keyword id="KW-0547">Nucleotide-binding</keyword>
<keyword id="KW-0614">Plasmid</keyword>
<keyword id="KW-1185">Reference proteome</keyword>
<keyword id="KW-0813">Transport</keyword>